<keyword id="KW-0227">DNA damage</keyword>
<keyword id="KW-0233">DNA recombination</keyword>
<keyword id="KW-0234">DNA repair</keyword>
<gene>
    <name evidence="1" type="primary">recO</name>
    <name type="ordered locus">Pnec_0415</name>
</gene>
<proteinExistence type="inferred from homology"/>
<protein>
    <recommendedName>
        <fullName evidence="1">DNA repair protein RecO</fullName>
    </recommendedName>
    <alternativeName>
        <fullName evidence="1">Recombination protein O</fullName>
    </alternativeName>
</protein>
<organism>
    <name type="scientific">Polynucleobacter necessarius subsp. necessarius (strain STIR1)</name>
    <dbReference type="NCBI Taxonomy" id="452638"/>
    <lineage>
        <taxon>Bacteria</taxon>
        <taxon>Pseudomonadati</taxon>
        <taxon>Pseudomonadota</taxon>
        <taxon>Betaproteobacteria</taxon>
        <taxon>Burkholderiales</taxon>
        <taxon>Burkholderiaceae</taxon>
        <taxon>Polynucleobacter</taxon>
    </lineage>
</organism>
<accession>B1XTL6</accession>
<feature type="chain" id="PRO_1000193407" description="DNA repair protein RecO">
    <location>
        <begin position="1"/>
        <end position="244"/>
    </location>
</feature>
<dbReference type="EMBL" id="CP001010">
    <property type="protein sequence ID" value="ACB43693.1"/>
    <property type="molecule type" value="Genomic_DNA"/>
</dbReference>
<dbReference type="SMR" id="B1XTL6"/>
<dbReference type="STRING" id="452638.Pnec_0415"/>
<dbReference type="KEGG" id="pne:Pnec_0415"/>
<dbReference type="eggNOG" id="COG1381">
    <property type="taxonomic scope" value="Bacteria"/>
</dbReference>
<dbReference type="HOGENOM" id="CLU_066645_1_0_4"/>
<dbReference type="OrthoDB" id="9804792at2"/>
<dbReference type="GO" id="GO:0043590">
    <property type="term" value="C:bacterial nucleoid"/>
    <property type="evidence" value="ECO:0007669"/>
    <property type="project" value="TreeGrafter"/>
</dbReference>
<dbReference type="GO" id="GO:0006310">
    <property type="term" value="P:DNA recombination"/>
    <property type="evidence" value="ECO:0007669"/>
    <property type="project" value="UniProtKB-UniRule"/>
</dbReference>
<dbReference type="GO" id="GO:0006302">
    <property type="term" value="P:double-strand break repair"/>
    <property type="evidence" value="ECO:0007669"/>
    <property type="project" value="TreeGrafter"/>
</dbReference>
<dbReference type="Gene3D" id="2.40.50.140">
    <property type="entry name" value="Nucleic acid-binding proteins"/>
    <property type="match status" value="1"/>
</dbReference>
<dbReference type="Gene3D" id="1.20.1440.120">
    <property type="entry name" value="Recombination protein O, C-terminal domain"/>
    <property type="match status" value="1"/>
</dbReference>
<dbReference type="HAMAP" id="MF_00201">
    <property type="entry name" value="RecO"/>
    <property type="match status" value="1"/>
</dbReference>
<dbReference type="InterPro" id="IPR037278">
    <property type="entry name" value="ARFGAP/RecO"/>
</dbReference>
<dbReference type="InterPro" id="IPR022572">
    <property type="entry name" value="DNA_rep/recomb_RecO_N"/>
</dbReference>
<dbReference type="InterPro" id="IPR012340">
    <property type="entry name" value="NA-bd_OB-fold"/>
</dbReference>
<dbReference type="InterPro" id="IPR003717">
    <property type="entry name" value="RecO"/>
</dbReference>
<dbReference type="InterPro" id="IPR042242">
    <property type="entry name" value="RecO_C"/>
</dbReference>
<dbReference type="NCBIfam" id="TIGR00613">
    <property type="entry name" value="reco"/>
    <property type="match status" value="1"/>
</dbReference>
<dbReference type="PANTHER" id="PTHR33991">
    <property type="entry name" value="DNA REPAIR PROTEIN RECO"/>
    <property type="match status" value="1"/>
</dbReference>
<dbReference type="PANTHER" id="PTHR33991:SF1">
    <property type="entry name" value="DNA REPAIR PROTEIN RECO"/>
    <property type="match status" value="1"/>
</dbReference>
<dbReference type="Pfam" id="PF02565">
    <property type="entry name" value="RecO_C"/>
    <property type="match status" value="1"/>
</dbReference>
<dbReference type="Pfam" id="PF11967">
    <property type="entry name" value="RecO_N"/>
    <property type="match status" value="1"/>
</dbReference>
<dbReference type="SUPFAM" id="SSF57863">
    <property type="entry name" value="ArfGap/RecO-like zinc finger"/>
    <property type="match status" value="1"/>
</dbReference>
<dbReference type="SUPFAM" id="SSF50249">
    <property type="entry name" value="Nucleic acid-binding proteins"/>
    <property type="match status" value="1"/>
</dbReference>
<name>RECO_POLNS</name>
<sequence length="244" mass="27729">MASIRVADEPAFVLHSIPYKETSLILDVFTRQYGRMALIAKGAKRQHSTLRPVLQRFQPLLVSWSGKSELRTLTKSEWVGGMPSLVGDALLCGFYLNELLVKFLAREDDYEKLYDRYAETINALSNLEFESKGLEEILRQFELSLLQETGYAAALDRCVENNEAPLAQEQYVYQPERGVRPVQVDDPGHWPVLTGKSLLAIAISDFSDPETLSESKQLMRFLLGLHLQDQVLTTRQILIDLKKI</sequence>
<comment type="function">
    <text evidence="1">Involved in DNA repair and RecF pathway recombination.</text>
</comment>
<comment type="similarity">
    <text evidence="1">Belongs to the RecO family.</text>
</comment>
<reference key="1">
    <citation type="journal article" date="2013" name="Proc. Natl. Acad. Sci. U.S.A.">
        <title>Polynucleobacter necessarius, a model for genome reduction in both free-living and symbiotic bacteria.</title>
        <authorList>
            <person name="Boscaro V."/>
            <person name="Felletti M."/>
            <person name="Vannini C."/>
            <person name="Ackerman M.S."/>
            <person name="Chain P.S."/>
            <person name="Malfatti S."/>
            <person name="Vergez L.M."/>
            <person name="Shin M."/>
            <person name="Doak T.G."/>
            <person name="Lynch M."/>
            <person name="Petroni G."/>
        </authorList>
    </citation>
    <scope>NUCLEOTIDE SEQUENCE [LARGE SCALE GENOMIC DNA]</scope>
    <source>
        <strain>STIR1</strain>
    </source>
</reference>
<evidence type="ECO:0000255" key="1">
    <source>
        <dbReference type="HAMAP-Rule" id="MF_00201"/>
    </source>
</evidence>